<proteinExistence type="inferred from homology"/>
<evidence type="ECO:0000255" key="1"/>
<evidence type="ECO:0000269" key="2">
    <source>
    </source>
</evidence>
<evidence type="ECO:0000305" key="3"/>
<comment type="function">
    <text evidence="2">P60 has the capability to bind to microtubules and membrane vesicles in vitro.</text>
</comment>
<comment type="catalytic activity">
    <reaction>
        <text>oxaloacetate + ATP = phosphoenolpyruvate + ADP + CO2</text>
        <dbReference type="Rhea" id="RHEA:18617"/>
        <dbReference type="ChEBI" id="CHEBI:16452"/>
        <dbReference type="ChEBI" id="CHEBI:16526"/>
        <dbReference type="ChEBI" id="CHEBI:30616"/>
        <dbReference type="ChEBI" id="CHEBI:58702"/>
        <dbReference type="ChEBI" id="CHEBI:456216"/>
        <dbReference type="EC" id="4.1.1.49"/>
    </reaction>
</comment>
<comment type="pathway">
    <text>Carbohydrate biosynthesis; gluconeogenesis.</text>
</comment>
<comment type="subunit">
    <text>Homodimer.</text>
</comment>
<comment type="subcellular location">
    <subcellularLocation>
        <location>Glycosome</location>
    </subcellularLocation>
</comment>
<comment type="similarity">
    <text evidence="3">Belongs to the phosphoenolpyruvate carboxykinase (ATP) family.</text>
</comment>
<reference key="1">
    <citation type="journal article" date="1989" name="J. Biol. Chem.">
        <title>A glycosomal protein (p60) which is predominantly expressed in procyclic Trypanosoma brucei. Characterization and DNA sequence.</title>
        <authorList>
            <person name="Kueng V."/>
            <person name="Schlaeppi K."/>
            <person name="Schneider A."/>
            <person name="Seebeck T."/>
        </authorList>
    </citation>
    <scope>NUCLEOTIDE SEQUENCE [GENOMIC DNA]</scope>
</reference>
<reference key="2">
    <citation type="journal article" date="1989" name="Nucleic Acids Res.">
        <title>Trypanosome glycosomal protein P60 is homologous to phosphoenolpyruvate carboxykinase (ATP).</title>
        <authorList>
            <person name="Parsons M."/>
            <person name="Smith J.M."/>
        </authorList>
    </citation>
    <scope>FUNCTION</scope>
</reference>
<feature type="chain" id="PRO_0000203867" description="Phosphoenolpyruvate carboxykinase (ATP), glycosomal">
    <location>
        <begin position="1"/>
        <end position="472"/>
    </location>
</feature>
<feature type="binding site" evidence="1">
    <location>
        <begin position="221"/>
        <end position="228"/>
    </location>
    <ligand>
        <name>ATP</name>
        <dbReference type="ChEBI" id="CHEBI:30616"/>
    </ligand>
</feature>
<name>PCKA_TRYBB</name>
<dbReference type="EC" id="4.1.1.49"/>
<dbReference type="EMBL" id="M20570">
    <property type="protein sequence ID" value="AAA30199.1"/>
    <property type="molecule type" value="Genomic_DNA"/>
</dbReference>
<dbReference type="PIR" id="A33275">
    <property type="entry name" value="A33275"/>
</dbReference>
<dbReference type="SMR" id="P13735"/>
<dbReference type="UniPathway" id="UPA00138"/>
<dbReference type="GO" id="GO:0005829">
    <property type="term" value="C:cytosol"/>
    <property type="evidence" value="ECO:0007669"/>
    <property type="project" value="TreeGrafter"/>
</dbReference>
<dbReference type="GO" id="GO:0020015">
    <property type="term" value="C:glycosome"/>
    <property type="evidence" value="ECO:0007669"/>
    <property type="project" value="UniProtKB-SubCell"/>
</dbReference>
<dbReference type="GO" id="GO:0005524">
    <property type="term" value="F:ATP binding"/>
    <property type="evidence" value="ECO:0007669"/>
    <property type="project" value="UniProtKB-KW"/>
</dbReference>
<dbReference type="GO" id="GO:0004612">
    <property type="term" value="F:phosphoenolpyruvate carboxykinase (ATP) activity"/>
    <property type="evidence" value="ECO:0007669"/>
    <property type="project" value="UniProtKB-EC"/>
</dbReference>
<dbReference type="GO" id="GO:0006094">
    <property type="term" value="P:gluconeogenesis"/>
    <property type="evidence" value="ECO:0007669"/>
    <property type="project" value="UniProtKB-UniPathway"/>
</dbReference>
<dbReference type="Gene3D" id="3.90.228.20">
    <property type="match status" value="1"/>
</dbReference>
<dbReference type="Gene3D" id="3.40.449.10">
    <property type="entry name" value="Phosphoenolpyruvate Carboxykinase, domain 1"/>
    <property type="match status" value="1"/>
</dbReference>
<dbReference type="Gene3D" id="2.170.8.10">
    <property type="entry name" value="Phosphoenolpyruvate Carboxykinase, domain 2"/>
    <property type="match status" value="1"/>
</dbReference>
<dbReference type="HAMAP" id="MF_00453">
    <property type="entry name" value="PEPCK_ATP"/>
    <property type="match status" value="1"/>
</dbReference>
<dbReference type="InterPro" id="IPR001272">
    <property type="entry name" value="PEP_carboxykinase_ATP"/>
</dbReference>
<dbReference type="InterPro" id="IPR013035">
    <property type="entry name" value="PEP_carboxykinase_C"/>
</dbReference>
<dbReference type="InterPro" id="IPR008210">
    <property type="entry name" value="PEP_carboxykinase_N"/>
</dbReference>
<dbReference type="InterPro" id="IPR015994">
    <property type="entry name" value="PEPCK_ATP_CS"/>
</dbReference>
<dbReference type="NCBIfam" id="NF006821">
    <property type="entry name" value="PRK09344.1-3"/>
    <property type="match status" value="1"/>
</dbReference>
<dbReference type="PANTHER" id="PTHR30031:SF0">
    <property type="entry name" value="PHOSPHOENOLPYRUVATE CARBOXYKINASE (ATP)"/>
    <property type="match status" value="1"/>
</dbReference>
<dbReference type="PANTHER" id="PTHR30031">
    <property type="entry name" value="PHOSPHOENOLPYRUVATE CARBOXYKINASE ATP"/>
    <property type="match status" value="1"/>
</dbReference>
<dbReference type="Pfam" id="PF01293">
    <property type="entry name" value="PEPCK_ATP"/>
    <property type="match status" value="1"/>
</dbReference>
<dbReference type="PIRSF" id="PIRSF006294">
    <property type="entry name" value="PEP_crbxkin"/>
    <property type="match status" value="1"/>
</dbReference>
<dbReference type="SUPFAM" id="SSF68923">
    <property type="entry name" value="PEP carboxykinase N-terminal domain"/>
    <property type="match status" value="1"/>
</dbReference>
<dbReference type="SUPFAM" id="SSF53795">
    <property type="entry name" value="PEP carboxykinase-like"/>
    <property type="match status" value="1"/>
</dbReference>
<dbReference type="PROSITE" id="PS00532">
    <property type="entry name" value="PEPCK_ATP"/>
    <property type="match status" value="1"/>
</dbReference>
<accession>P13735</accession>
<keyword id="KW-0067">ATP-binding</keyword>
<keyword id="KW-0210">Decarboxylase</keyword>
<keyword id="KW-0312">Gluconeogenesis</keyword>
<keyword id="KW-0327">Glycosome</keyword>
<keyword id="KW-0456">Lyase</keyword>
<keyword id="KW-0547">Nucleotide-binding</keyword>
<keyword id="KW-0576">Peroxisome</keyword>
<sequence length="472" mass="52457">MAPIIHKNLTAPELVEWALKLEKDSQLTARGALSVRSYAKTGRSPRDKRIVNTTDVTDNVDWGSVNMKLTEESFEKLKTIAKDYFATCKHLFVMDCFAGHDERYRLKVRVYTTRPYHALFMRNMLIVPTLEELQSFGEPDYVIYNAGEAKADPTVPGVTSTTSVALNFKTREQVILGTEYAGEMKKGILTVMFELMPRMGHLCMHASANVGKSGDVTVFFGLSGTGKTTLSADPRRNLIGDDEHVWTDRGVFNIEGGCYAKAIGLNPETEKDIYEAVRFGAVAENCTLDRRTHEIDFNDESICKNTRVAYPLMHIDGALSKAVAGHPKNIIFLTNDAFGVMPPVARLTSAQAMFWFVMGYTANVPGVEAGSARVARPIFSSCFGGPFLVRHATHYGQQLAEKMEKHNSRVWLLNTGYAGGRADRGAKRMPLRVTRAIIDAIHDGTLDQADYEVYPGWAFTFLRGLRTCPQAC</sequence>
<protein>
    <recommendedName>
        <fullName>Phosphoenolpyruvate carboxykinase (ATP), glycosomal</fullName>
        <ecNumber>4.1.1.49</ecNumber>
    </recommendedName>
    <alternativeName>
        <fullName>Glycosomal protein p60</fullName>
    </alternativeName>
</protein>
<organism>
    <name type="scientific">Trypanosoma brucei brucei</name>
    <dbReference type="NCBI Taxonomy" id="5702"/>
    <lineage>
        <taxon>Eukaryota</taxon>
        <taxon>Discoba</taxon>
        <taxon>Euglenozoa</taxon>
        <taxon>Kinetoplastea</taxon>
        <taxon>Metakinetoplastina</taxon>
        <taxon>Trypanosomatida</taxon>
        <taxon>Trypanosomatidae</taxon>
        <taxon>Trypanosoma</taxon>
    </lineage>
</organism>